<evidence type="ECO:0000250" key="1">
    <source>
        <dbReference type="UniProtKB" id="P11384"/>
    </source>
</evidence>
<evidence type="ECO:0000255" key="2"/>
<evidence type="ECO:0000269" key="3">
    <source>
    </source>
</evidence>
<evidence type="ECO:0000269" key="4">
    <source>
    </source>
</evidence>
<evidence type="ECO:0000269" key="5">
    <source>
    </source>
</evidence>
<evidence type="ECO:0000269" key="6">
    <source>
    </source>
</evidence>
<evidence type="ECO:0000269" key="7">
    <source>
    </source>
</evidence>
<evidence type="ECO:0000269" key="8">
    <source>
    </source>
</evidence>
<evidence type="ECO:0000269" key="9">
    <source>
    </source>
</evidence>
<evidence type="ECO:0000303" key="10">
    <source>
    </source>
</evidence>
<evidence type="ECO:0000305" key="11"/>
<evidence type="ECO:0000312" key="12">
    <source>
        <dbReference type="MGI" id="MGI:99466"/>
    </source>
</evidence>
<sequence length="133" mass="14914">MEPPLPTPMLLLLLLLLSSSAALPAPPRTPRHSDGMFTSELSRLQDSARLQRLLQGLVGKRSEQDTENIPENSLARSKPLEDQLCLLWSNTQTLQDWLLPRLSLDGSLSLWLPPGPRSAVDRSEWTETTRPPR</sequence>
<organism>
    <name type="scientific">Mus musculus</name>
    <name type="common">Mouse</name>
    <dbReference type="NCBI Taxonomy" id="10090"/>
    <lineage>
        <taxon>Eukaryota</taxon>
        <taxon>Metazoa</taxon>
        <taxon>Chordata</taxon>
        <taxon>Craniata</taxon>
        <taxon>Vertebrata</taxon>
        <taxon>Euteleostomi</taxon>
        <taxon>Mammalia</taxon>
        <taxon>Eutheria</taxon>
        <taxon>Euarchontoglires</taxon>
        <taxon>Glires</taxon>
        <taxon>Rodentia</taxon>
        <taxon>Myomorpha</taxon>
        <taxon>Muroidea</taxon>
        <taxon>Muridae</taxon>
        <taxon>Murinae</taxon>
        <taxon>Mus</taxon>
        <taxon>Mus</taxon>
    </lineage>
</organism>
<proteinExistence type="evidence at transcript level"/>
<reference key="1">
    <citation type="journal article" date="1994" name="Biochem. Biophys. Res. Commun.">
        <title>cDNA sequence and genomic organization of mouse secretin.</title>
        <authorList>
            <person name="Lan M.S."/>
            <person name="Kajiyama W."/>
            <person name="Donadel G."/>
            <person name="Lu J."/>
            <person name="Notkins A.L."/>
        </authorList>
    </citation>
    <scope>NUCLEOTIDE SEQUENCE [MRNA]</scope>
</reference>
<reference key="2">
    <citation type="journal article" date="2008" name="Neuroscience">
        <title>Impaired hippocampal synaptic function in secretin deficient mice.</title>
        <authorList>
            <person name="Yamagata T."/>
            <person name="Urano H."/>
            <person name="Weeber E.J."/>
            <person name="Nelson D.L."/>
            <person name="Nishijima I."/>
        </authorList>
    </citation>
    <scope>FUNCTION</scope>
    <scope>TISSUE SPECIFICITY</scope>
    <scope>DISRUPTION PHENOTYPE</scope>
</reference>
<reference key="3">
    <citation type="journal article" date="2010" name="Hepatology">
        <title>Knockout of secretin receptor reduces large cholangiocyte hyperplasia in mice with extrahepatic cholestasis induced by bile duct ligation.</title>
        <authorList>
            <person name="Glaser S."/>
            <person name="Lam I.P."/>
            <person name="Franchitto A."/>
            <person name="Gaudio E."/>
            <person name="Onori P."/>
            <person name="Chow B.K."/>
            <person name="Wise C."/>
            <person name="Kopriva S."/>
            <person name="Venter J."/>
            <person name="White M."/>
            <person name="Ueno Y."/>
            <person name="Dostal D."/>
            <person name="Carpino G."/>
            <person name="Mancinelli R."/>
            <person name="Butler W."/>
            <person name="Chiasson V."/>
            <person name="DeMorrow S."/>
            <person name="Francis H."/>
            <person name="Alpini G."/>
        </authorList>
    </citation>
    <scope>FUNCTION</scope>
</reference>
<reference key="4">
    <citation type="journal article" date="2011" name="Hum. Mol. Genet.">
        <title>Secretin deficiency causes impairment in survival of neural progenitor cells in mice.</title>
        <authorList>
            <person name="Jukkola P.I."/>
            <person name="Rogers J.T."/>
            <person name="Kaspar B.K."/>
            <person name="Weeber E.J."/>
            <person name="Nishijima I."/>
        </authorList>
    </citation>
    <scope>FUNCTION</scope>
    <scope>DISRUPTION PHENOTYPE</scope>
</reference>
<reference key="5">
    <citation type="journal article" date="2010" name="FASEB J.">
        <title>An indispensable role of secretin in mediating the osmoregulatory functions of angiotensin II.</title>
        <authorList>
            <person name="Lee V.H."/>
            <person name="Lee L.T."/>
            <person name="Chu J.Y."/>
            <person name="Lam I.P."/>
            <person name="Siu F.K."/>
            <person name="Vaudry H."/>
            <person name="Chow B.K."/>
        </authorList>
    </citation>
    <scope>FUNCTION</scope>
</reference>
<reference key="6">
    <citation type="journal article" date="2011" name="Neuropsychopharmacology">
        <title>Central and peripheral administration of secretin inhibits food intake in mice through the activation of the melanocortin system.</title>
        <authorList>
            <person name="Cheng C.Y."/>
            <person name="Chu J.Y."/>
            <person name="Chow B.K."/>
        </authorList>
    </citation>
    <scope>FUNCTION</scope>
</reference>
<reference key="7">
    <citation type="journal article" date="2014" name="J. Lipid Res.">
        <title>Lipolytic actions of secretin in mouse adipocytes.</title>
        <authorList>
            <person name="Sekar R."/>
            <person name="Chow B.K."/>
        </authorList>
    </citation>
    <scope>FUNCTION</scope>
</reference>
<reference key="8">
    <citation type="journal article" date="2018" name="Cell">
        <title>Secretin-activated brown fat mediates prandial thermogenesis to induce satiation.</title>
        <authorList>
            <person name="Li Y."/>
            <person name="Schnabl K."/>
            <person name="Gabler S.M."/>
            <person name="Willershaeuser M."/>
            <person name="Reber J."/>
            <person name="Karlas A."/>
            <person name="Laurila S."/>
            <person name="Lahesmaa M."/>
            <person name="U Din M."/>
            <person name="Bast-Habersbrunner A."/>
            <person name="Virtanen K.A."/>
            <person name="Fromme T."/>
            <person name="Bolze F."/>
            <person name="O'Farrell L.S."/>
            <person name="Alsina-Fernandez J."/>
            <person name="Coskun T."/>
            <person name="Ntziachristos V."/>
            <person name="Nuutila P."/>
            <person name="Klingenspor M."/>
        </authorList>
    </citation>
    <scope>FUNCTION</scope>
</reference>
<protein>
    <recommendedName>
        <fullName evidence="10">Secretin</fullName>
    </recommendedName>
</protein>
<comment type="function">
    <text evidence="3 4 5 6 7 8 9">Hormone involved in different processes, such as regulation of the pH of the duodenal content, food intake and water homeostasis (PubMed:20578263, PubMed:20739612, PubMed:20927047, PubMed:30449620). Exerts its biological effects by binding to secretin receptor (SCTR), a G-protein coupled receptor expressed in the basolateral domain of several cells (PubMed:30449620). Acts as a key gastrointestinal hormone by regulating the pH of the duodenal content (PubMed:20578263). Secreted by S cells of the duodenum in the crypts of Lieberkuehn and regulates the pH of the duodenum by (1) inhibiting the secretion of gastric acid from the parietal cells of the stomach and (2) stimulating the production of bicarbonate (NaHCO(3)) from the ductal cells of the pancreas (PubMed:20578263). Production of bicarbonate is essential to neutralize the pH and ensure no damage is done to the small intestine by the gastric acid (PubMed:20578263). In addition to regulating the pH of the duodenal content, plays a central role in diet induced thermogenesis: acts as a non-sympathetic brown fat (BAT) activator mediating prandial thermogenesis, which consequentially induces satiation (PubMed:30449620). Mechanistically, secretin released by the gut after a meal binds to secretin receptor (SCTR) in brown adipocytes, activating brown fat thermogenesis by stimulating lipolysis, which is sensed in the brain and promotes satiation (PubMed:30449620). Also able to stimulate lipolysis in white adipocytes (PubMed:24273196). Also plays an important role in cellular osmoregulation: released into the systemic circulation in response to hyperosmolality and acts at different levels in the hypothalamus, pituitary and kidney to regulate water homeostasis (PubMed:20739612). Also plays a role in the central nervous system, possibly by acting as a neuropeptide hormone: required for hippocampal synaptic function and neural progenitor cells maintenance (PubMed:18534766, PubMed:21159798).</text>
</comment>
<comment type="subcellular location">
    <subcellularLocation>
        <location evidence="1">Secreted</location>
    </subcellularLocation>
</comment>
<comment type="tissue specificity">
    <text evidence="3">Highly expressed in the intestine (PubMed:18534766). Also expressed in the hippocampus, cerebellum and the brain stem in adult mouse brain (PubMed:18534766). In the hippocampus, expressed in the dentate gyrus, the hilus and the molecular layer (PubMed:18534766).</text>
</comment>
<comment type="disruption phenotype">
    <text evidence="3 7">Mice are viable and fertile (PubMed:18534766). Mice however display impairment in synaptic plasticity in the CA1 area of the hippocampus (PubMed:18534766). Mice exhibit decreased neural progenitor cells in the subgranular zone of the dentate gyrus during the early postnatal period, leading to decreased volume of dentate gyrus, reduced long-term potentiation and impaired spatial learning ability in adults (PubMed:21159798).</text>
</comment>
<comment type="similarity">
    <text evidence="11">Belongs to the glucagon family.</text>
</comment>
<name>SECR_MOUSE</name>
<feature type="signal peptide" evidence="2">
    <location>
        <begin position="1"/>
        <end position="22"/>
    </location>
</feature>
<feature type="propeptide" id="PRO_0000011426" evidence="1">
    <location>
        <begin position="23"/>
        <end position="30"/>
    </location>
</feature>
<feature type="peptide" id="PRO_0000011427" description="Secretin" evidence="1">
    <location>
        <begin position="32"/>
        <end position="58"/>
    </location>
</feature>
<feature type="propeptide" id="PRO_0000011428" evidence="1">
    <location>
        <begin position="62"/>
        <end position="133"/>
    </location>
</feature>
<feature type="modified residue" description="Valine amide" evidence="1">
    <location>
        <position position="58"/>
    </location>
</feature>
<feature type="modified residue" description="Phosphoserine" evidence="1">
    <location>
        <position position="62"/>
    </location>
</feature>
<gene>
    <name evidence="12" type="primary">Sct</name>
</gene>
<keyword id="KW-0027">Amidation</keyword>
<keyword id="KW-0165">Cleavage on pair of basic residues</keyword>
<keyword id="KW-0372">Hormone</keyword>
<keyword id="KW-0597">Phosphoprotein</keyword>
<keyword id="KW-1185">Reference proteome</keyword>
<keyword id="KW-0964">Secreted</keyword>
<keyword id="KW-0732">Signal</keyword>
<accession>Q08535</accession>
<dbReference type="EMBL" id="U07568">
    <property type="protein sequence ID" value="AAA18453.1"/>
    <property type="molecule type" value="Unassigned_DNA"/>
</dbReference>
<dbReference type="EMBL" id="X73580">
    <property type="protein sequence ID" value="CAA51982.1"/>
    <property type="molecule type" value="mRNA"/>
</dbReference>
<dbReference type="CCDS" id="CCDS40184.1"/>
<dbReference type="PIR" id="JC2202">
    <property type="entry name" value="JC2202"/>
</dbReference>
<dbReference type="RefSeq" id="NP_035458.1">
    <property type="nucleotide sequence ID" value="NM_011328.4"/>
</dbReference>
<dbReference type="SMR" id="Q08535"/>
<dbReference type="FunCoup" id="Q08535">
    <property type="interactions" value="525"/>
</dbReference>
<dbReference type="STRING" id="10090.ENSMUSP00000041519"/>
<dbReference type="GlyGen" id="Q08535">
    <property type="glycosylation" value="1 site"/>
</dbReference>
<dbReference type="PhosphoSitePlus" id="Q08535"/>
<dbReference type="PaxDb" id="10090-ENSMUSP00000041519"/>
<dbReference type="ProteomicsDB" id="256767"/>
<dbReference type="Antibodypedia" id="9839">
    <property type="antibodies" value="195 antibodies from 30 providers"/>
</dbReference>
<dbReference type="Ensembl" id="ENSMUST00000167790.3">
    <property type="protein sequence ID" value="ENSMUSP00000128729.2"/>
    <property type="gene ID" value="ENSMUSG00000038580.14"/>
</dbReference>
<dbReference type="GeneID" id="20287"/>
<dbReference type="KEGG" id="mmu:20287"/>
<dbReference type="UCSC" id="uc009kkl.2">
    <property type="organism name" value="mouse"/>
</dbReference>
<dbReference type="AGR" id="MGI:99466"/>
<dbReference type="CTD" id="6343"/>
<dbReference type="MGI" id="MGI:99466">
    <property type="gene designation" value="Sct"/>
</dbReference>
<dbReference type="VEuPathDB" id="HostDB:ENSMUSG00000038580"/>
<dbReference type="eggNOG" id="ENOG502R8F0">
    <property type="taxonomic scope" value="Eukaryota"/>
</dbReference>
<dbReference type="GeneTree" id="ENSGT00390000002624"/>
<dbReference type="HOGENOM" id="CLU_1991937_0_0_1"/>
<dbReference type="InParanoid" id="Q08535"/>
<dbReference type="OMA" id="HAPFPWL"/>
<dbReference type="OrthoDB" id="9417777at2759"/>
<dbReference type="PhylomeDB" id="Q08535"/>
<dbReference type="Reactome" id="R-MMU-418555">
    <property type="pathway name" value="G alpha (s) signalling events"/>
</dbReference>
<dbReference type="Reactome" id="R-MMU-420092">
    <property type="pathway name" value="Glucagon-type ligand receptors"/>
</dbReference>
<dbReference type="BioGRID-ORCS" id="20287">
    <property type="hits" value="2 hits in 78 CRISPR screens"/>
</dbReference>
<dbReference type="ChiTaRS" id="Sct">
    <property type="organism name" value="mouse"/>
</dbReference>
<dbReference type="PRO" id="PR:Q08535"/>
<dbReference type="Proteomes" id="UP000000589">
    <property type="component" value="Chromosome 7"/>
</dbReference>
<dbReference type="RNAct" id="Q08535">
    <property type="molecule type" value="protein"/>
</dbReference>
<dbReference type="Bgee" id="ENSMUSG00000038580">
    <property type="expression patterns" value="Expressed in placenta labyrinth and 93 other cell types or tissues"/>
</dbReference>
<dbReference type="ExpressionAtlas" id="Q08535">
    <property type="expression patterns" value="baseline and differential"/>
</dbReference>
<dbReference type="GO" id="GO:0005615">
    <property type="term" value="C:extracellular space"/>
    <property type="evidence" value="ECO:0000250"/>
    <property type="project" value="UniProtKB"/>
</dbReference>
<dbReference type="GO" id="GO:0046659">
    <property type="term" value="F:digestive hormone activity"/>
    <property type="evidence" value="ECO:0000250"/>
    <property type="project" value="UniProtKB"/>
</dbReference>
<dbReference type="GO" id="GO:0005179">
    <property type="term" value="F:hormone activity"/>
    <property type="evidence" value="ECO:0000250"/>
    <property type="project" value="UniProtKB"/>
</dbReference>
<dbReference type="GO" id="GO:0007189">
    <property type="term" value="P:adenylate cyclase-activating G protein-coupled receptor signaling pathway"/>
    <property type="evidence" value="ECO:0000314"/>
    <property type="project" value="GO_Central"/>
</dbReference>
<dbReference type="GO" id="GO:0021542">
    <property type="term" value="P:dentate gyrus development"/>
    <property type="evidence" value="ECO:0000315"/>
    <property type="project" value="MGI"/>
</dbReference>
<dbReference type="GO" id="GO:0002024">
    <property type="term" value="P:diet induced thermogenesis"/>
    <property type="evidence" value="ECO:0000314"/>
    <property type="project" value="UniProtKB"/>
</dbReference>
<dbReference type="GO" id="GO:0021766">
    <property type="term" value="P:hippocampus development"/>
    <property type="evidence" value="ECO:0000315"/>
    <property type="project" value="UniProtKB"/>
</dbReference>
<dbReference type="GO" id="GO:0009992">
    <property type="term" value="P:intracellular water homeostasis"/>
    <property type="evidence" value="ECO:0000250"/>
    <property type="project" value="UniProtKB"/>
</dbReference>
<dbReference type="GO" id="GO:0043524">
    <property type="term" value="P:negative regulation of neuron apoptotic process"/>
    <property type="evidence" value="ECO:0000315"/>
    <property type="project" value="MGI"/>
</dbReference>
<dbReference type="GO" id="GO:0051402">
    <property type="term" value="P:neuron apoptotic process"/>
    <property type="evidence" value="ECO:0000315"/>
    <property type="project" value="MGI"/>
</dbReference>
<dbReference type="GO" id="GO:0097150">
    <property type="term" value="P:neuronal stem cell population maintenance"/>
    <property type="evidence" value="ECO:0000315"/>
    <property type="project" value="MGI"/>
</dbReference>
<dbReference type="GO" id="GO:0050996">
    <property type="term" value="P:positive regulation of lipid catabolic process"/>
    <property type="evidence" value="ECO:0000314"/>
    <property type="project" value="UniProtKB"/>
</dbReference>
<dbReference type="GO" id="GO:0032098">
    <property type="term" value="P:regulation of appetite"/>
    <property type="evidence" value="ECO:0000314"/>
    <property type="project" value="UniProtKB"/>
</dbReference>
<dbReference type="GO" id="GO:0048167">
    <property type="term" value="P:regulation of synaptic plasticity"/>
    <property type="evidence" value="ECO:0000315"/>
    <property type="project" value="UniProtKB"/>
</dbReference>
<dbReference type="GO" id="GO:0031667">
    <property type="term" value="P:response to nutrient levels"/>
    <property type="evidence" value="ECO:0000314"/>
    <property type="project" value="UniProtKB"/>
</dbReference>
<dbReference type="GO" id="GO:0008542">
    <property type="term" value="P:visual learning"/>
    <property type="evidence" value="ECO:0000315"/>
    <property type="project" value="MGI"/>
</dbReference>
<dbReference type="InterPro" id="IPR000532">
    <property type="entry name" value="Glucagon_GIP_secretin_VIP"/>
</dbReference>
<dbReference type="InterPro" id="IPR015675">
    <property type="entry name" value="Prosecretin"/>
</dbReference>
<dbReference type="PANTHER" id="PTHR17378">
    <property type="entry name" value="SECRETIN"/>
    <property type="match status" value="1"/>
</dbReference>
<dbReference type="PANTHER" id="PTHR17378:SF1">
    <property type="entry name" value="SECRETIN"/>
    <property type="match status" value="1"/>
</dbReference>
<dbReference type="SMART" id="SM00070">
    <property type="entry name" value="GLUCA"/>
    <property type="match status" value="1"/>
</dbReference>
<dbReference type="PROSITE" id="PS00260">
    <property type="entry name" value="GLUCAGON"/>
    <property type="match status" value="1"/>
</dbReference>